<reference key="1">
    <citation type="journal article" date="1996" name="Nucleic Acids Res.">
        <title>Complete sequence analysis of the genome of the bacterium Mycoplasma pneumoniae.</title>
        <authorList>
            <person name="Himmelreich R."/>
            <person name="Hilbert H."/>
            <person name="Plagens H."/>
            <person name="Pirkl E."/>
            <person name="Li B.-C."/>
            <person name="Herrmann R."/>
        </authorList>
    </citation>
    <scope>NUCLEOTIDE SEQUENCE [LARGE SCALE GENOMIC DNA]</scope>
    <source>
        <strain>ATCC 29342 / M129 / Subtype 1</strain>
    </source>
</reference>
<organism>
    <name type="scientific">Mycoplasma pneumoniae (strain ATCC 29342 / M129 / Subtype 1)</name>
    <name type="common">Mycoplasmoides pneumoniae</name>
    <dbReference type="NCBI Taxonomy" id="272634"/>
    <lineage>
        <taxon>Bacteria</taxon>
        <taxon>Bacillati</taxon>
        <taxon>Mycoplasmatota</taxon>
        <taxon>Mycoplasmoidales</taxon>
        <taxon>Mycoplasmoidaceae</taxon>
        <taxon>Mycoplasmoides</taxon>
    </lineage>
</organism>
<feature type="signal peptide" evidence="1">
    <location>
        <begin position="1"/>
        <end position="22"/>
    </location>
</feature>
<feature type="chain" id="PRO_0000018734" description="Uncharacterized lipoprotein MPN_506">
    <location>
        <begin position="23"/>
        <end position="793"/>
    </location>
</feature>
<feature type="region of interest" description="Disordered" evidence="2">
    <location>
        <begin position="181"/>
        <end position="200"/>
    </location>
</feature>
<feature type="region of interest" description="Disordered" evidence="2">
    <location>
        <begin position="212"/>
        <end position="264"/>
    </location>
</feature>
<feature type="region of interest" description="Disordered" evidence="2">
    <location>
        <begin position="444"/>
        <end position="504"/>
    </location>
</feature>
<feature type="compositionally biased region" description="Basic and acidic residues" evidence="2">
    <location>
        <begin position="212"/>
        <end position="227"/>
    </location>
</feature>
<feature type="compositionally biased region" description="Polar residues" evidence="2">
    <location>
        <begin position="237"/>
        <end position="246"/>
    </location>
</feature>
<feature type="compositionally biased region" description="Basic and acidic residues" evidence="2">
    <location>
        <begin position="247"/>
        <end position="264"/>
    </location>
</feature>
<feature type="compositionally biased region" description="Polar residues" evidence="2">
    <location>
        <begin position="449"/>
        <end position="468"/>
    </location>
</feature>
<feature type="compositionally biased region" description="Basic and acidic residues" evidence="2">
    <location>
        <begin position="472"/>
        <end position="485"/>
    </location>
</feature>
<feature type="compositionally biased region" description="Low complexity" evidence="2">
    <location>
        <begin position="491"/>
        <end position="504"/>
    </location>
</feature>
<feature type="lipid moiety-binding region" description="N-palmitoyl cysteine" evidence="1">
    <location>
        <position position="23"/>
    </location>
</feature>
<feature type="lipid moiety-binding region" description="S-diacylglycerol cysteine" evidence="1">
    <location>
        <position position="23"/>
    </location>
</feature>
<dbReference type="EMBL" id="U00089">
    <property type="protein sequence ID" value="AAB95984.1"/>
    <property type="molecule type" value="Genomic_DNA"/>
</dbReference>
<dbReference type="PIR" id="S73662">
    <property type="entry name" value="S73662"/>
</dbReference>
<dbReference type="RefSeq" id="NP_110194.1">
    <property type="nucleotide sequence ID" value="NC_000912.1"/>
</dbReference>
<dbReference type="RefSeq" id="WP_010874862.1">
    <property type="nucleotide sequence ID" value="NZ_OU342337.1"/>
</dbReference>
<dbReference type="STRING" id="272634.MPN_506"/>
<dbReference type="EnsemblBacteria" id="AAB95984">
    <property type="protein sequence ID" value="AAB95984"/>
    <property type="gene ID" value="MPN_506"/>
</dbReference>
<dbReference type="KEGG" id="mpn:MPN_506"/>
<dbReference type="PATRIC" id="fig|272634.6.peg.555"/>
<dbReference type="HOGENOM" id="CLU_017227_1_0_14"/>
<dbReference type="OrthoDB" id="393769at2"/>
<dbReference type="BioCyc" id="MPNE272634:G1GJ3-829-MONOMER"/>
<dbReference type="Proteomes" id="UP000000808">
    <property type="component" value="Chromosome"/>
</dbReference>
<dbReference type="GO" id="GO:0005886">
    <property type="term" value="C:plasma membrane"/>
    <property type="evidence" value="ECO:0007669"/>
    <property type="project" value="UniProtKB-SubCell"/>
</dbReference>
<dbReference type="Gene3D" id="3.40.190.10">
    <property type="entry name" value="Periplasmic binding protein-like II"/>
    <property type="match status" value="1"/>
</dbReference>
<dbReference type="InterPro" id="IPR004890">
    <property type="entry name" value="Lipoprotein_10_C"/>
</dbReference>
<dbReference type="InterPro" id="IPR004984">
    <property type="entry name" value="Mycoplasma_lipoprotein_cen_dom"/>
</dbReference>
<dbReference type="InterPro" id="IPR054825">
    <property type="entry name" value="P68-like"/>
</dbReference>
<dbReference type="NCBIfam" id="NF045826">
    <property type="entry name" value="lipo_P68"/>
    <property type="match status" value="1"/>
</dbReference>
<dbReference type="Pfam" id="PF03202">
    <property type="entry name" value="Lipoprotein_10"/>
    <property type="match status" value="1"/>
</dbReference>
<dbReference type="Pfam" id="PF03305">
    <property type="entry name" value="Lipoprotein_X"/>
    <property type="match status" value="1"/>
</dbReference>
<dbReference type="PROSITE" id="PS51257">
    <property type="entry name" value="PROKAR_LIPOPROTEIN"/>
    <property type="match status" value="1"/>
</dbReference>
<gene>
    <name type="ordered locus">MPN_506</name>
    <name type="ORF">MP336</name>
    <name type="ORF">P02_orf793</name>
</gene>
<evidence type="ECO:0000255" key="1">
    <source>
        <dbReference type="PROSITE-ProRule" id="PRU00303"/>
    </source>
</evidence>
<evidence type="ECO:0000256" key="2">
    <source>
        <dbReference type="SAM" id="MobiDB-lite"/>
    </source>
</evidence>
<evidence type="ECO:0000305" key="3"/>
<name>Y506_MYCPN</name>
<accession>P75280</accession>
<keyword id="KW-1003">Cell membrane</keyword>
<keyword id="KW-0449">Lipoprotein</keyword>
<keyword id="KW-0472">Membrane</keyword>
<keyword id="KW-0564">Palmitate</keyword>
<keyword id="KW-1185">Reference proteome</keyword>
<keyword id="KW-0732">Signal</keyword>
<sequence>MKFKYGAIFFSGFLGLSAILAACGTKGKFDQVDDGKIKLASSLTSKSASKALQAIVKKYNEVKKPGDYPIEITQIAGGYDGGRSDLQTRVNVKDTTNFYNLILNYPDLVSTLGRVGMELPFDNVKVDKLSPRFLDFNNRISAISKPGIYGIPVSLSTEVLSINGPVLHYILNNAKKKEGTLNQKMTSSSEGKNSSGTLTVATDTETSSLWKKIEDSAKANGKSDEKGKGKKKDNKSATFSLVQLKQTQEKTDDSQDTKNSDDQVKKSWGEYQEVDGVLKNFEFKASIFENWHDLLDFSTRVAKSFKKIHENSNKKGNDIQGILGVDSTPNSLFTSVFAAGGGDYNNFFYKIENGRADFSNFKNKGTSYQNLQKVFGDFKGLIDKNGIFVNKGGSYSSNFQKFHQLAYSISSTSGFFYSFAGKSAKRLNFGDSFIEYPRFTQEIKAPSKNGENGQTNEGNSTNGEQNLLGTFEVKDDSKPKEEVKSNKNSGKESSQNQGKKSNNNKTIYLYETKIPDGKTAGDNAILIKDKNVIEKLKSAAKEENKEQTAEATKAAITSNKAKSTKKESSKVIGYTTTDSVREDGKNIFAIDRVNGENYDRKIIVGAKAETLNQSSTLQSEEAIVLPAPGKYLNGDPKKVTITQGPNIIGIHANEKENAETQKFVDWFLNSPQTWEKQSRDKKGSSEKQTAAEFFAESASYILPLKEIFDKNDTKTEKGKNSKTQQRTNTYAEKALELFKQISQNQIVSYSDPSDFRSGKFRDAIGATFNAAVSSKADFNKFVQNFTATLGSDI</sequence>
<comment type="subcellular location">
    <subcellularLocation>
        <location evidence="1">Cell membrane</location>
        <topology evidence="1">Lipid-anchor</topology>
    </subcellularLocation>
</comment>
<comment type="similarity">
    <text evidence="3">Belongs to the MG185/MG260 family.</text>
</comment>
<protein>
    <recommendedName>
        <fullName>Uncharacterized lipoprotein MPN_506</fullName>
    </recommendedName>
</protein>
<proteinExistence type="inferred from homology"/>